<sequence length="280" mass="30996">MKRMIIDGKEISNRIKEEVKREIQEFGYKPRLAILMAGDDESSKVYANSKVKACESVGIEAKVYYFSEKEEDKFFDTLEKLNEDKDTHGIMIEMPLPKGFDVDKVYDTINPYKDVDCISNYNMGRLFAGKPLFVPCTPKAIIHILENTGVDLEGKHAVVIGRSNILGKPVAKLLLDKNCTVTVCHSKTKDLAYHTKQADVLVVAAGKMNLVRGDMVKEGVVLIDAGINVHEGKIYGDADFESIKDKASYVTPVPGGVGPVTTAMILKNTLEAFKYAVKSL</sequence>
<name>FOLD_CALS4</name>
<dbReference type="EC" id="1.5.1.5" evidence="1"/>
<dbReference type="EC" id="3.5.4.9" evidence="1"/>
<dbReference type="EMBL" id="AE008691">
    <property type="protein sequence ID" value="AAM24517.1"/>
    <property type="molecule type" value="Genomic_DNA"/>
</dbReference>
<dbReference type="SMR" id="Q8RAD0"/>
<dbReference type="STRING" id="273068.TTE1293"/>
<dbReference type="KEGG" id="tte:TTE1293"/>
<dbReference type="eggNOG" id="COG0190">
    <property type="taxonomic scope" value="Bacteria"/>
</dbReference>
<dbReference type="HOGENOM" id="CLU_034045_2_1_9"/>
<dbReference type="UniPathway" id="UPA00193"/>
<dbReference type="Proteomes" id="UP000000555">
    <property type="component" value="Chromosome"/>
</dbReference>
<dbReference type="GO" id="GO:0005829">
    <property type="term" value="C:cytosol"/>
    <property type="evidence" value="ECO:0007669"/>
    <property type="project" value="TreeGrafter"/>
</dbReference>
<dbReference type="GO" id="GO:0004477">
    <property type="term" value="F:methenyltetrahydrofolate cyclohydrolase activity"/>
    <property type="evidence" value="ECO:0007669"/>
    <property type="project" value="UniProtKB-UniRule"/>
</dbReference>
<dbReference type="GO" id="GO:0004488">
    <property type="term" value="F:methylenetetrahydrofolate dehydrogenase (NADP+) activity"/>
    <property type="evidence" value="ECO:0007669"/>
    <property type="project" value="UniProtKB-UniRule"/>
</dbReference>
<dbReference type="GO" id="GO:0000105">
    <property type="term" value="P:L-histidine biosynthetic process"/>
    <property type="evidence" value="ECO:0007669"/>
    <property type="project" value="UniProtKB-KW"/>
</dbReference>
<dbReference type="GO" id="GO:0009086">
    <property type="term" value="P:methionine biosynthetic process"/>
    <property type="evidence" value="ECO:0007669"/>
    <property type="project" value="UniProtKB-KW"/>
</dbReference>
<dbReference type="GO" id="GO:0006164">
    <property type="term" value="P:purine nucleotide biosynthetic process"/>
    <property type="evidence" value="ECO:0007669"/>
    <property type="project" value="UniProtKB-KW"/>
</dbReference>
<dbReference type="GO" id="GO:0035999">
    <property type="term" value="P:tetrahydrofolate interconversion"/>
    <property type="evidence" value="ECO:0007669"/>
    <property type="project" value="UniProtKB-UniRule"/>
</dbReference>
<dbReference type="CDD" id="cd01080">
    <property type="entry name" value="NAD_bind_m-THF_DH_Cyclohyd"/>
    <property type="match status" value="1"/>
</dbReference>
<dbReference type="FunFam" id="3.40.50.720:FF:000094">
    <property type="entry name" value="Bifunctional protein FolD"/>
    <property type="match status" value="1"/>
</dbReference>
<dbReference type="FunFam" id="3.40.50.10860:FF:000005">
    <property type="entry name" value="C-1-tetrahydrofolate synthase, cytoplasmic, putative"/>
    <property type="match status" value="1"/>
</dbReference>
<dbReference type="Gene3D" id="3.40.50.10860">
    <property type="entry name" value="Leucine Dehydrogenase, chain A, domain 1"/>
    <property type="match status" value="1"/>
</dbReference>
<dbReference type="Gene3D" id="3.40.50.720">
    <property type="entry name" value="NAD(P)-binding Rossmann-like Domain"/>
    <property type="match status" value="1"/>
</dbReference>
<dbReference type="HAMAP" id="MF_01576">
    <property type="entry name" value="THF_DHG_CYH"/>
    <property type="match status" value="1"/>
</dbReference>
<dbReference type="InterPro" id="IPR046346">
    <property type="entry name" value="Aminoacid_DH-like_N_sf"/>
</dbReference>
<dbReference type="InterPro" id="IPR036291">
    <property type="entry name" value="NAD(P)-bd_dom_sf"/>
</dbReference>
<dbReference type="InterPro" id="IPR000672">
    <property type="entry name" value="THF_DH/CycHdrlase"/>
</dbReference>
<dbReference type="InterPro" id="IPR020630">
    <property type="entry name" value="THF_DH/CycHdrlase_cat_dom"/>
</dbReference>
<dbReference type="InterPro" id="IPR020631">
    <property type="entry name" value="THF_DH/CycHdrlase_NAD-bd_dom"/>
</dbReference>
<dbReference type="PANTHER" id="PTHR48099:SF5">
    <property type="entry name" value="C-1-TETRAHYDROFOLATE SYNTHASE, CYTOPLASMIC"/>
    <property type="match status" value="1"/>
</dbReference>
<dbReference type="PANTHER" id="PTHR48099">
    <property type="entry name" value="C-1-TETRAHYDROFOLATE SYNTHASE, CYTOPLASMIC-RELATED"/>
    <property type="match status" value="1"/>
</dbReference>
<dbReference type="Pfam" id="PF00763">
    <property type="entry name" value="THF_DHG_CYH"/>
    <property type="match status" value="1"/>
</dbReference>
<dbReference type="Pfam" id="PF02882">
    <property type="entry name" value="THF_DHG_CYH_C"/>
    <property type="match status" value="1"/>
</dbReference>
<dbReference type="PRINTS" id="PR00085">
    <property type="entry name" value="THFDHDRGNASE"/>
</dbReference>
<dbReference type="SUPFAM" id="SSF53223">
    <property type="entry name" value="Aminoacid dehydrogenase-like, N-terminal domain"/>
    <property type="match status" value="1"/>
</dbReference>
<dbReference type="SUPFAM" id="SSF51735">
    <property type="entry name" value="NAD(P)-binding Rossmann-fold domains"/>
    <property type="match status" value="1"/>
</dbReference>
<proteinExistence type="inferred from homology"/>
<comment type="function">
    <text evidence="1">Catalyzes the oxidation of 5,10-methylenetetrahydrofolate to 5,10-methenyltetrahydrofolate and then the hydrolysis of 5,10-methenyltetrahydrofolate to 10-formyltetrahydrofolate.</text>
</comment>
<comment type="catalytic activity">
    <reaction evidence="1">
        <text>(6R)-5,10-methylene-5,6,7,8-tetrahydrofolate + NADP(+) = (6R)-5,10-methenyltetrahydrofolate + NADPH</text>
        <dbReference type="Rhea" id="RHEA:22812"/>
        <dbReference type="ChEBI" id="CHEBI:15636"/>
        <dbReference type="ChEBI" id="CHEBI:57455"/>
        <dbReference type="ChEBI" id="CHEBI:57783"/>
        <dbReference type="ChEBI" id="CHEBI:58349"/>
        <dbReference type="EC" id="1.5.1.5"/>
    </reaction>
</comment>
<comment type="catalytic activity">
    <reaction evidence="1">
        <text>(6R)-5,10-methenyltetrahydrofolate + H2O = (6R)-10-formyltetrahydrofolate + H(+)</text>
        <dbReference type="Rhea" id="RHEA:23700"/>
        <dbReference type="ChEBI" id="CHEBI:15377"/>
        <dbReference type="ChEBI" id="CHEBI:15378"/>
        <dbReference type="ChEBI" id="CHEBI:57455"/>
        <dbReference type="ChEBI" id="CHEBI:195366"/>
        <dbReference type="EC" id="3.5.4.9"/>
    </reaction>
</comment>
<comment type="pathway">
    <text evidence="1">One-carbon metabolism; tetrahydrofolate interconversion.</text>
</comment>
<comment type="subunit">
    <text evidence="1">Homodimer.</text>
</comment>
<comment type="similarity">
    <text evidence="1">Belongs to the tetrahydrofolate dehydrogenase/cyclohydrolase family.</text>
</comment>
<organism>
    <name type="scientific">Caldanaerobacter subterraneus subsp. tengcongensis (strain DSM 15242 / JCM 11007 / NBRC 100824 / MB4)</name>
    <name type="common">Thermoanaerobacter tengcongensis</name>
    <dbReference type="NCBI Taxonomy" id="273068"/>
    <lineage>
        <taxon>Bacteria</taxon>
        <taxon>Bacillati</taxon>
        <taxon>Bacillota</taxon>
        <taxon>Clostridia</taxon>
        <taxon>Thermoanaerobacterales</taxon>
        <taxon>Thermoanaerobacteraceae</taxon>
        <taxon>Caldanaerobacter</taxon>
    </lineage>
</organism>
<keyword id="KW-0028">Amino-acid biosynthesis</keyword>
<keyword id="KW-0368">Histidine biosynthesis</keyword>
<keyword id="KW-0378">Hydrolase</keyword>
<keyword id="KW-0486">Methionine biosynthesis</keyword>
<keyword id="KW-0511">Multifunctional enzyme</keyword>
<keyword id="KW-0521">NADP</keyword>
<keyword id="KW-0554">One-carbon metabolism</keyword>
<keyword id="KW-0560">Oxidoreductase</keyword>
<keyword id="KW-0658">Purine biosynthesis</keyword>
<keyword id="KW-1185">Reference proteome</keyword>
<evidence type="ECO:0000255" key="1">
    <source>
        <dbReference type="HAMAP-Rule" id="MF_01576"/>
    </source>
</evidence>
<accession>Q8RAD0</accession>
<reference key="1">
    <citation type="journal article" date="2002" name="Genome Res.">
        <title>A complete sequence of the T. tengcongensis genome.</title>
        <authorList>
            <person name="Bao Q."/>
            <person name="Tian Y."/>
            <person name="Li W."/>
            <person name="Xu Z."/>
            <person name="Xuan Z."/>
            <person name="Hu S."/>
            <person name="Dong W."/>
            <person name="Yang J."/>
            <person name="Chen Y."/>
            <person name="Xue Y."/>
            <person name="Xu Y."/>
            <person name="Lai X."/>
            <person name="Huang L."/>
            <person name="Dong X."/>
            <person name="Ma Y."/>
            <person name="Ling L."/>
            <person name="Tan H."/>
            <person name="Chen R."/>
            <person name="Wang J."/>
            <person name="Yu J."/>
            <person name="Yang H."/>
        </authorList>
    </citation>
    <scope>NUCLEOTIDE SEQUENCE [LARGE SCALE GENOMIC DNA]</scope>
    <source>
        <strain>DSM 15242 / JCM 11007 / NBRC 100824 / MB4</strain>
    </source>
</reference>
<protein>
    <recommendedName>
        <fullName evidence="1">Bifunctional protein FolD</fullName>
    </recommendedName>
    <domain>
        <recommendedName>
            <fullName evidence="1">Methylenetetrahydrofolate dehydrogenase</fullName>
            <ecNumber evidence="1">1.5.1.5</ecNumber>
        </recommendedName>
    </domain>
    <domain>
        <recommendedName>
            <fullName evidence="1">Methenyltetrahydrofolate cyclohydrolase</fullName>
            <ecNumber evidence="1">3.5.4.9</ecNumber>
        </recommendedName>
    </domain>
</protein>
<gene>
    <name evidence="1" type="primary">folD</name>
    <name type="ordered locus">TTE1293</name>
</gene>
<feature type="chain" id="PRO_0000268542" description="Bifunctional protein FolD">
    <location>
        <begin position="1"/>
        <end position="280"/>
    </location>
</feature>
<feature type="binding site" evidence="1">
    <location>
        <begin position="161"/>
        <end position="163"/>
    </location>
    <ligand>
        <name>NADP(+)</name>
        <dbReference type="ChEBI" id="CHEBI:58349"/>
    </ligand>
</feature>
<feature type="binding site" evidence="1">
    <location>
        <position position="186"/>
    </location>
    <ligand>
        <name>NADP(+)</name>
        <dbReference type="ChEBI" id="CHEBI:58349"/>
    </ligand>
</feature>
<feature type="binding site" evidence="1">
    <location>
        <position position="227"/>
    </location>
    <ligand>
        <name>NADP(+)</name>
        <dbReference type="ChEBI" id="CHEBI:58349"/>
    </ligand>
</feature>